<evidence type="ECO:0000255" key="1">
    <source>
        <dbReference type="HAMAP-Rule" id="MF_00003"/>
    </source>
</evidence>
<evidence type="ECO:0000256" key="2">
    <source>
        <dbReference type="SAM" id="MobiDB-lite"/>
    </source>
</evidence>
<protein>
    <recommendedName>
        <fullName evidence="1">Ribosome-binding factor A</fullName>
    </recommendedName>
</protein>
<reference key="1">
    <citation type="journal article" date="2000" name="DNA Res.">
        <title>Complete genome structure of the nitrogen-fixing symbiotic bacterium Mesorhizobium loti.</title>
        <authorList>
            <person name="Kaneko T."/>
            <person name="Nakamura Y."/>
            <person name="Sato S."/>
            <person name="Asamizu E."/>
            <person name="Kato T."/>
            <person name="Sasamoto S."/>
            <person name="Watanabe A."/>
            <person name="Idesawa K."/>
            <person name="Ishikawa A."/>
            <person name="Kawashima K."/>
            <person name="Kimura T."/>
            <person name="Kishida Y."/>
            <person name="Kiyokawa C."/>
            <person name="Kohara M."/>
            <person name="Matsumoto M."/>
            <person name="Matsuno A."/>
            <person name="Mochizuki Y."/>
            <person name="Nakayama S."/>
            <person name="Nakazaki N."/>
            <person name="Shimpo S."/>
            <person name="Sugimoto M."/>
            <person name="Takeuchi C."/>
            <person name="Yamada M."/>
            <person name="Tabata S."/>
        </authorList>
    </citation>
    <scope>NUCLEOTIDE SEQUENCE [LARGE SCALE GENOMIC DNA]</scope>
    <source>
        <strain>LMG 29417 / CECT 9101 / MAFF 303099</strain>
    </source>
</reference>
<feature type="chain" id="PRO_0000102717" description="Ribosome-binding factor A">
    <location>
        <begin position="1"/>
        <end position="146"/>
    </location>
</feature>
<feature type="region of interest" description="Disordered" evidence="2">
    <location>
        <begin position="125"/>
        <end position="146"/>
    </location>
</feature>
<accession>Q98BI7</accession>
<proteinExistence type="inferred from homology"/>
<gene>
    <name evidence="1" type="primary">rbfA</name>
    <name type="ordered locus">mlr5557</name>
</gene>
<comment type="function">
    <text evidence="1">One of several proteins that assist in the late maturation steps of the functional core of the 30S ribosomal subunit. Associates with free 30S ribosomal subunits (but not with 30S subunits that are part of 70S ribosomes or polysomes). Required for efficient processing of 16S rRNA. May interact with the 5'-terminal helix region of 16S rRNA.</text>
</comment>
<comment type="subunit">
    <text evidence="1">Monomer. Binds 30S ribosomal subunits, but not 50S ribosomal subunits or 70S ribosomes.</text>
</comment>
<comment type="subcellular location">
    <subcellularLocation>
        <location evidence="1">Cytoplasm</location>
    </subcellularLocation>
</comment>
<comment type="similarity">
    <text evidence="1">Belongs to the RbfA family.</text>
</comment>
<dbReference type="EMBL" id="BA000012">
    <property type="protein sequence ID" value="BAB51985.1"/>
    <property type="molecule type" value="Genomic_DNA"/>
</dbReference>
<dbReference type="RefSeq" id="WP_010913323.1">
    <property type="nucleotide sequence ID" value="NC_002678.2"/>
</dbReference>
<dbReference type="SMR" id="Q98BI7"/>
<dbReference type="KEGG" id="mlo:mlr5557"/>
<dbReference type="PATRIC" id="fig|266835.9.peg.4417"/>
<dbReference type="eggNOG" id="COG0858">
    <property type="taxonomic scope" value="Bacteria"/>
</dbReference>
<dbReference type="HOGENOM" id="CLU_089475_1_0_5"/>
<dbReference type="Proteomes" id="UP000000552">
    <property type="component" value="Chromosome"/>
</dbReference>
<dbReference type="GO" id="GO:0005829">
    <property type="term" value="C:cytosol"/>
    <property type="evidence" value="ECO:0007669"/>
    <property type="project" value="TreeGrafter"/>
</dbReference>
<dbReference type="GO" id="GO:0043024">
    <property type="term" value="F:ribosomal small subunit binding"/>
    <property type="evidence" value="ECO:0007669"/>
    <property type="project" value="TreeGrafter"/>
</dbReference>
<dbReference type="GO" id="GO:0030490">
    <property type="term" value="P:maturation of SSU-rRNA"/>
    <property type="evidence" value="ECO:0007669"/>
    <property type="project" value="UniProtKB-UniRule"/>
</dbReference>
<dbReference type="Gene3D" id="3.30.300.20">
    <property type="match status" value="1"/>
</dbReference>
<dbReference type="HAMAP" id="MF_00003">
    <property type="entry name" value="RbfA"/>
    <property type="match status" value="1"/>
</dbReference>
<dbReference type="InterPro" id="IPR015946">
    <property type="entry name" value="KH_dom-like_a/b"/>
</dbReference>
<dbReference type="InterPro" id="IPR000238">
    <property type="entry name" value="RbfA"/>
</dbReference>
<dbReference type="InterPro" id="IPR023799">
    <property type="entry name" value="RbfA_dom_sf"/>
</dbReference>
<dbReference type="InterPro" id="IPR020053">
    <property type="entry name" value="Ribosome-bd_factorA_CS"/>
</dbReference>
<dbReference type="NCBIfam" id="NF001802">
    <property type="entry name" value="PRK00521.2-5"/>
    <property type="match status" value="1"/>
</dbReference>
<dbReference type="NCBIfam" id="TIGR00082">
    <property type="entry name" value="rbfA"/>
    <property type="match status" value="1"/>
</dbReference>
<dbReference type="PANTHER" id="PTHR33515">
    <property type="entry name" value="RIBOSOME-BINDING FACTOR A, CHLOROPLASTIC-RELATED"/>
    <property type="match status" value="1"/>
</dbReference>
<dbReference type="PANTHER" id="PTHR33515:SF1">
    <property type="entry name" value="RIBOSOME-BINDING FACTOR A, CHLOROPLASTIC-RELATED"/>
    <property type="match status" value="1"/>
</dbReference>
<dbReference type="Pfam" id="PF02033">
    <property type="entry name" value="RBFA"/>
    <property type="match status" value="1"/>
</dbReference>
<dbReference type="SUPFAM" id="SSF89919">
    <property type="entry name" value="Ribosome-binding factor A, RbfA"/>
    <property type="match status" value="1"/>
</dbReference>
<dbReference type="PROSITE" id="PS01319">
    <property type="entry name" value="RBFA"/>
    <property type="match status" value="1"/>
</dbReference>
<organism>
    <name type="scientific">Mesorhizobium japonicum (strain LMG 29417 / CECT 9101 / MAFF 303099)</name>
    <name type="common">Mesorhizobium loti (strain MAFF 303099)</name>
    <dbReference type="NCBI Taxonomy" id="266835"/>
    <lineage>
        <taxon>Bacteria</taxon>
        <taxon>Pseudomonadati</taxon>
        <taxon>Pseudomonadota</taxon>
        <taxon>Alphaproteobacteria</taxon>
        <taxon>Hyphomicrobiales</taxon>
        <taxon>Phyllobacteriaceae</taxon>
        <taxon>Mesorhizobium</taxon>
    </lineage>
</organism>
<keyword id="KW-0963">Cytoplasm</keyword>
<keyword id="KW-0690">Ribosome biogenesis</keyword>
<name>RBFA_RHILO</name>
<sequence length="146" mass="16417">MPRPTTSSPSQRMLRVAEQVRHALSETLQRGEIIDPLIENTVVSVSEVRMSPDLRVATAFVSPLGAKDTDAVVEALNKHAKFVRGRVSGALRQMKFMPEFRFKLDTSFDNFARINDLLKSPEVARDLDADDDKTKDDRAKDDKDSE</sequence>